<protein>
    <recommendedName>
        <fullName evidence="1">tRNA pseudouridine synthase B</fullName>
        <ecNumber evidence="1">5.4.99.25</ecNumber>
    </recommendedName>
    <alternativeName>
        <fullName evidence="1">tRNA pseudouridine(55) synthase</fullName>
        <shortName evidence="1">Psi55 synthase</shortName>
    </alternativeName>
    <alternativeName>
        <fullName evidence="1">tRNA pseudouridylate synthase</fullName>
    </alternativeName>
    <alternativeName>
        <fullName evidence="1">tRNA-uridine isomerase</fullName>
    </alternativeName>
</protein>
<sequence length="330" mass="36626">MNENLNGILNVYKEAGWTSFDVVAKLRCILKTKKIGHGGTLDPSVTGVLPIAVGKSTRLLEYMEAAGKIYEGQVTIGFSTETEDADGAIVNQTPVKNNLTESEIDSAMSRFVGKIKQIPPMYSAVKINGKKLYEYARAGQTIERPAREITIKSFVRTSPIDWNKEEGLVTFSFKVECSKGTYVRTLAVDLADSLGYAGHMSKLQRTASNGLLIKDAIKLSKIEEIQESGKLSTILYPAEYAVSDLPRVNLTTVQFDMARVGKKFAQSDWTNEVETADSSVNKTKQQEYLLTDLSLLTTEKFAAFYNDKLVAVYMKHPEKEGIWKPNKVLV</sequence>
<feature type="chain" id="PRO_1000084615" description="tRNA pseudouridine synthase B">
    <location>
        <begin position="1"/>
        <end position="330"/>
    </location>
</feature>
<feature type="active site" description="Nucleophile" evidence="1">
    <location>
        <position position="42"/>
    </location>
</feature>
<organism>
    <name type="scientific">Lactococcus lactis subsp. cremoris (strain SK11)</name>
    <dbReference type="NCBI Taxonomy" id="272622"/>
    <lineage>
        <taxon>Bacteria</taxon>
        <taxon>Bacillati</taxon>
        <taxon>Bacillota</taxon>
        <taxon>Bacilli</taxon>
        <taxon>Lactobacillales</taxon>
        <taxon>Streptococcaceae</taxon>
        <taxon>Lactococcus</taxon>
        <taxon>Lactococcus cremoris subsp. cremoris</taxon>
    </lineage>
</organism>
<name>TRUB_LACLS</name>
<comment type="function">
    <text evidence="1">Responsible for synthesis of pseudouridine from uracil-55 in the psi GC loop of transfer RNAs.</text>
</comment>
<comment type="catalytic activity">
    <reaction evidence="1">
        <text>uridine(55) in tRNA = pseudouridine(55) in tRNA</text>
        <dbReference type="Rhea" id="RHEA:42532"/>
        <dbReference type="Rhea" id="RHEA-COMP:10101"/>
        <dbReference type="Rhea" id="RHEA-COMP:10102"/>
        <dbReference type="ChEBI" id="CHEBI:65314"/>
        <dbReference type="ChEBI" id="CHEBI:65315"/>
        <dbReference type="EC" id="5.4.99.25"/>
    </reaction>
</comment>
<comment type="similarity">
    <text evidence="1">Belongs to the pseudouridine synthase TruB family. Type 1 subfamily.</text>
</comment>
<dbReference type="EC" id="5.4.99.25" evidence="1"/>
<dbReference type="EMBL" id="CP000425">
    <property type="protein sequence ID" value="ABJ72767.1"/>
    <property type="molecule type" value="Genomic_DNA"/>
</dbReference>
<dbReference type="SMR" id="Q02Z55"/>
<dbReference type="KEGG" id="llc:LACR_1237"/>
<dbReference type="HOGENOM" id="CLU_032087_0_1_9"/>
<dbReference type="Proteomes" id="UP000000240">
    <property type="component" value="Chromosome"/>
</dbReference>
<dbReference type="GO" id="GO:0003723">
    <property type="term" value="F:RNA binding"/>
    <property type="evidence" value="ECO:0007669"/>
    <property type="project" value="InterPro"/>
</dbReference>
<dbReference type="GO" id="GO:0160148">
    <property type="term" value="F:tRNA pseudouridine(55) synthase activity"/>
    <property type="evidence" value="ECO:0007669"/>
    <property type="project" value="UniProtKB-EC"/>
</dbReference>
<dbReference type="GO" id="GO:1990481">
    <property type="term" value="P:mRNA pseudouridine synthesis"/>
    <property type="evidence" value="ECO:0007669"/>
    <property type="project" value="TreeGrafter"/>
</dbReference>
<dbReference type="GO" id="GO:0031119">
    <property type="term" value="P:tRNA pseudouridine synthesis"/>
    <property type="evidence" value="ECO:0007669"/>
    <property type="project" value="UniProtKB-UniRule"/>
</dbReference>
<dbReference type="CDD" id="cd02573">
    <property type="entry name" value="PseudoU_synth_EcTruB"/>
    <property type="match status" value="1"/>
</dbReference>
<dbReference type="FunFam" id="3.30.2350.10:FF:000011">
    <property type="entry name" value="tRNA pseudouridine synthase B"/>
    <property type="match status" value="1"/>
</dbReference>
<dbReference type="Gene3D" id="3.30.2350.10">
    <property type="entry name" value="Pseudouridine synthase"/>
    <property type="match status" value="1"/>
</dbReference>
<dbReference type="HAMAP" id="MF_01080">
    <property type="entry name" value="TruB_bact"/>
    <property type="match status" value="1"/>
</dbReference>
<dbReference type="InterPro" id="IPR020103">
    <property type="entry name" value="PsdUridine_synth_cat_dom_sf"/>
</dbReference>
<dbReference type="InterPro" id="IPR002501">
    <property type="entry name" value="PsdUridine_synth_N"/>
</dbReference>
<dbReference type="InterPro" id="IPR014780">
    <property type="entry name" value="tRNA_psdUridine_synth_TruB"/>
</dbReference>
<dbReference type="InterPro" id="IPR032819">
    <property type="entry name" value="TruB_C"/>
</dbReference>
<dbReference type="NCBIfam" id="TIGR00431">
    <property type="entry name" value="TruB"/>
    <property type="match status" value="1"/>
</dbReference>
<dbReference type="PANTHER" id="PTHR13767:SF2">
    <property type="entry name" value="PSEUDOURIDYLATE SYNTHASE TRUB1"/>
    <property type="match status" value="1"/>
</dbReference>
<dbReference type="PANTHER" id="PTHR13767">
    <property type="entry name" value="TRNA-PSEUDOURIDINE SYNTHASE"/>
    <property type="match status" value="1"/>
</dbReference>
<dbReference type="Pfam" id="PF16198">
    <property type="entry name" value="TruB_C_2"/>
    <property type="match status" value="1"/>
</dbReference>
<dbReference type="Pfam" id="PF01509">
    <property type="entry name" value="TruB_N"/>
    <property type="match status" value="1"/>
</dbReference>
<dbReference type="SUPFAM" id="SSF55120">
    <property type="entry name" value="Pseudouridine synthase"/>
    <property type="match status" value="1"/>
</dbReference>
<evidence type="ECO:0000255" key="1">
    <source>
        <dbReference type="HAMAP-Rule" id="MF_01080"/>
    </source>
</evidence>
<keyword id="KW-0413">Isomerase</keyword>
<keyword id="KW-0819">tRNA processing</keyword>
<accession>Q02Z55</accession>
<gene>
    <name evidence="1" type="primary">truB</name>
    <name type="ordered locus">LACR_1237</name>
</gene>
<proteinExistence type="inferred from homology"/>
<reference key="1">
    <citation type="journal article" date="2006" name="Proc. Natl. Acad. Sci. U.S.A.">
        <title>Comparative genomics of the lactic acid bacteria.</title>
        <authorList>
            <person name="Makarova K.S."/>
            <person name="Slesarev A."/>
            <person name="Wolf Y.I."/>
            <person name="Sorokin A."/>
            <person name="Mirkin B."/>
            <person name="Koonin E.V."/>
            <person name="Pavlov A."/>
            <person name="Pavlova N."/>
            <person name="Karamychev V."/>
            <person name="Polouchine N."/>
            <person name="Shakhova V."/>
            <person name="Grigoriev I."/>
            <person name="Lou Y."/>
            <person name="Rohksar D."/>
            <person name="Lucas S."/>
            <person name="Huang K."/>
            <person name="Goodstein D.M."/>
            <person name="Hawkins T."/>
            <person name="Plengvidhya V."/>
            <person name="Welker D."/>
            <person name="Hughes J."/>
            <person name="Goh Y."/>
            <person name="Benson A."/>
            <person name="Baldwin K."/>
            <person name="Lee J.-H."/>
            <person name="Diaz-Muniz I."/>
            <person name="Dosti B."/>
            <person name="Smeianov V."/>
            <person name="Wechter W."/>
            <person name="Barabote R."/>
            <person name="Lorca G."/>
            <person name="Altermann E."/>
            <person name="Barrangou R."/>
            <person name="Ganesan B."/>
            <person name="Xie Y."/>
            <person name="Rawsthorne H."/>
            <person name="Tamir D."/>
            <person name="Parker C."/>
            <person name="Breidt F."/>
            <person name="Broadbent J.R."/>
            <person name="Hutkins R."/>
            <person name="O'Sullivan D."/>
            <person name="Steele J."/>
            <person name="Unlu G."/>
            <person name="Saier M.H. Jr."/>
            <person name="Klaenhammer T."/>
            <person name="Richardson P."/>
            <person name="Kozyavkin S."/>
            <person name="Weimer B.C."/>
            <person name="Mills D.A."/>
        </authorList>
    </citation>
    <scope>NUCLEOTIDE SEQUENCE [LARGE SCALE GENOMIC DNA]</scope>
    <source>
        <strain>SK11</strain>
    </source>
</reference>